<organism>
    <name type="scientific">Merluccius capensis</name>
    <name type="common">Shallow-water Cape hake</name>
    <name type="synonym">Gadus merluccius</name>
    <dbReference type="NCBI Taxonomy" id="89947"/>
    <lineage>
        <taxon>Eukaryota</taxon>
        <taxon>Metazoa</taxon>
        <taxon>Chordata</taxon>
        <taxon>Craniata</taxon>
        <taxon>Vertebrata</taxon>
        <taxon>Euteleostomi</taxon>
        <taxon>Actinopterygii</taxon>
        <taxon>Neopterygii</taxon>
        <taxon>Teleostei</taxon>
        <taxon>Neoteleostei</taxon>
        <taxon>Acanthomorphata</taxon>
        <taxon>Zeiogadaria</taxon>
        <taxon>Gadariae</taxon>
        <taxon>Gadiformes</taxon>
        <taxon>Gadoidei</taxon>
        <taxon>Merlucciidae</taxon>
        <taxon>Merluccius</taxon>
    </lineage>
</organism>
<sequence>AFSGILAEADIAAALKACEAAGTFNYKAFFAKVGLTGKSADDIKKAFFVIDQDKSGFIEEDELKLFLQVFSAGARALTDDETKAFLKAGDSDGDGAIGVEEWAALVKA</sequence>
<comment type="function">
    <text evidence="2 3">In muscle, parvalbumin is thought to be involved in relaxation after contraction. It binds two calcium ions (By similarity).</text>
</comment>
<comment type="mass spectrometry"/>
<comment type="miscellaneous">
    <text evidence="2 6">Is regarded as an important allergen.</text>
</comment>
<comment type="miscellaneous">
    <text evidence="6">On the 2D-gel the determined pI of this protein is: 4.20, its MW is: 11.38 kDa.</text>
</comment>
<comment type="similarity">
    <text evidence="4">Belongs to the parvalbumin family.</text>
</comment>
<name>PRVB2_MERCP</name>
<feature type="chain" id="PRO_0000399416" description="Parvalbumin beta 2">
    <location>
        <begin position="1"/>
        <end position="108"/>
    </location>
</feature>
<feature type="domain" description="EF-hand 1" evidence="5">
    <location>
        <begin position="38"/>
        <end position="73"/>
    </location>
</feature>
<feature type="domain" description="EF-hand 2" evidence="5">
    <location>
        <begin position="77"/>
        <end position="108"/>
    </location>
</feature>
<feature type="binding site" evidence="1 5">
    <location>
        <position position="51"/>
    </location>
    <ligand>
        <name>Ca(2+)</name>
        <dbReference type="ChEBI" id="CHEBI:29108"/>
        <label>1</label>
    </ligand>
</feature>
<feature type="binding site" evidence="1 5">
    <location>
        <position position="53"/>
    </location>
    <ligand>
        <name>Ca(2+)</name>
        <dbReference type="ChEBI" id="CHEBI:29108"/>
        <label>1</label>
    </ligand>
</feature>
<feature type="binding site" evidence="1 5">
    <location>
        <position position="55"/>
    </location>
    <ligand>
        <name>Ca(2+)</name>
        <dbReference type="ChEBI" id="CHEBI:29108"/>
        <label>1</label>
    </ligand>
</feature>
<feature type="binding site" evidence="1">
    <location>
        <position position="57"/>
    </location>
    <ligand>
        <name>Ca(2+)</name>
        <dbReference type="ChEBI" id="CHEBI:29108"/>
        <label>1</label>
    </ligand>
</feature>
<feature type="binding site" evidence="1">
    <location>
        <position position="59"/>
    </location>
    <ligand>
        <name>Ca(2+)</name>
        <dbReference type="ChEBI" id="CHEBI:29108"/>
        <label>1</label>
    </ligand>
</feature>
<feature type="binding site" evidence="1 5">
    <location>
        <position position="62"/>
    </location>
    <ligand>
        <name>Ca(2+)</name>
        <dbReference type="ChEBI" id="CHEBI:29108"/>
        <label>1</label>
    </ligand>
</feature>
<feature type="binding site" evidence="1 5">
    <location>
        <position position="90"/>
    </location>
    <ligand>
        <name>Ca(2+)</name>
        <dbReference type="ChEBI" id="CHEBI:29108"/>
        <label>2</label>
    </ligand>
</feature>
<feature type="binding site" evidence="1 5">
    <location>
        <position position="92"/>
    </location>
    <ligand>
        <name>Ca(2+)</name>
        <dbReference type="ChEBI" id="CHEBI:29108"/>
        <label>2</label>
    </ligand>
</feature>
<feature type="binding site" evidence="1 5">
    <location>
        <position position="94"/>
    </location>
    <ligand>
        <name>Ca(2+)</name>
        <dbReference type="ChEBI" id="CHEBI:29108"/>
        <label>2</label>
    </ligand>
</feature>
<feature type="binding site" evidence="1">
    <location>
        <position position="96"/>
    </location>
    <ligand>
        <name>Ca(2+)</name>
        <dbReference type="ChEBI" id="CHEBI:29108"/>
        <label>2</label>
    </ligand>
</feature>
<feature type="binding site" evidence="1 5">
    <location>
        <position position="101"/>
    </location>
    <ligand>
        <name>Ca(2+)</name>
        <dbReference type="ChEBI" id="CHEBI:29108"/>
        <label>2</label>
    </ligand>
</feature>
<feature type="modified residue" description="N-acetylalanine" evidence="6">
    <location>
        <position position="1"/>
    </location>
</feature>
<feature type="unsure residue" description="I or L" evidence="6">
    <location>
        <position position="5"/>
    </location>
</feature>
<feature type="unsure residue" description="L or I" evidence="6">
    <location>
        <position position="6"/>
    </location>
</feature>
<feature type="unsure residue" description="I or L" evidence="6">
    <location>
        <position position="11"/>
    </location>
</feature>
<feature type="unsure residue" description="L or I" evidence="6">
    <location>
        <position position="15"/>
    </location>
</feature>
<feature type="unsure residue" description="K or Q" evidence="6">
    <location>
        <position position="16"/>
    </location>
</feature>
<feature type="unsure residue" description="K or Q" evidence="6">
    <location>
        <position position="27"/>
    </location>
</feature>
<feature type="unsure residue" description="K or Q" evidence="6">
    <location>
        <position position="32"/>
    </location>
</feature>
<feature type="unsure residue" description="L or I" evidence="6">
    <location>
        <position position="35"/>
    </location>
</feature>
<feature type="unsure residue" description="K or Q" evidence="6">
    <location>
        <position position="38"/>
    </location>
</feature>
<feature type="unsure residue" description="I or L" evidence="6">
    <location>
        <position position="43"/>
    </location>
</feature>
<feature type="unsure residue" description="K or Q" evidence="6">
    <location>
        <position position="44"/>
    </location>
</feature>
<feature type="unsure residue" description="K or Q" evidence="6">
    <location>
        <position position="45"/>
    </location>
</feature>
<feature type="unsure residue" description="I or L" evidence="6">
    <location>
        <position position="50"/>
    </location>
</feature>
<feature type="unsure residue" description="Q or K" evidence="6">
    <location>
        <position position="52"/>
    </location>
</feature>
<feature type="unsure residue" description="K or Q" evidence="6">
    <location>
        <position position="54"/>
    </location>
</feature>
<feature type="unsure residue" description="I or L" evidence="6">
    <location>
        <position position="58"/>
    </location>
</feature>
<feature type="unsure residue" description="L or I" evidence="6">
    <location>
        <position position="63"/>
    </location>
</feature>
<feature type="unsure residue" description="K or Q" evidence="6">
    <location>
        <position position="64"/>
    </location>
</feature>
<feature type="unsure residue" description="L or I" evidence="6">
    <location>
        <position position="65"/>
    </location>
</feature>
<feature type="unsure residue" description="L or I" evidence="6">
    <location>
        <position position="67"/>
    </location>
</feature>
<feature type="unsure residue" description="Q or K" evidence="6">
    <location>
        <position position="68"/>
    </location>
</feature>
<feature type="unsure residue" description="L or I" evidence="6">
    <location>
        <position position="77"/>
    </location>
</feature>
<feature type="unsure residue" description="K or Q" evidence="6">
    <location>
        <position position="83"/>
    </location>
</feature>
<feature type="unsure residue" description="L or I" evidence="6">
    <location>
        <position position="86"/>
    </location>
</feature>
<feature type="unsure residue" description="K or Q" evidence="6">
    <location>
        <position position="87"/>
    </location>
</feature>
<feature type="unsure residue" description="I or L" evidence="6">
    <location>
        <position position="97"/>
    </location>
</feature>
<feature type="unsure residue" description="L or I" evidence="6">
    <location>
        <position position="105"/>
    </location>
</feature>
<feature type="unsure residue" description="K or Q" evidence="6">
    <location>
        <position position="107"/>
    </location>
</feature>
<protein>
    <recommendedName>
        <fullName evidence="7">Parvalbumin beta 2</fullName>
    </recommendedName>
</protein>
<accession>P86757</accession>
<keyword id="KW-0007">Acetylation</keyword>
<keyword id="KW-0020">Allergen</keyword>
<keyword id="KW-0106">Calcium</keyword>
<keyword id="KW-0903">Direct protein sequencing</keyword>
<keyword id="KW-0479">Metal-binding</keyword>
<keyword id="KW-0514">Muscle protein</keyword>
<keyword id="KW-0677">Repeat</keyword>
<dbReference type="SMR" id="P86757"/>
<dbReference type="Allergome" id="7645">
    <property type="allergen name" value="Mer ca 1"/>
</dbReference>
<dbReference type="iPTMnet" id="P86757"/>
<dbReference type="GO" id="GO:0005737">
    <property type="term" value="C:cytoplasm"/>
    <property type="evidence" value="ECO:0007669"/>
    <property type="project" value="TreeGrafter"/>
</dbReference>
<dbReference type="GO" id="GO:0005509">
    <property type="term" value="F:calcium ion binding"/>
    <property type="evidence" value="ECO:0007669"/>
    <property type="project" value="InterPro"/>
</dbReference>
<dbReference type="CDD" id="cd16255">
    <property type="entry name" value="EFh_parvalbumin_beta"/>
    <property type="match status" value="1"/>
</dbReference>
<dbReference type="FunFam" id="1.10.238.10:FF:000060">
    <property type="entry name" value="Parvalbumin, thymic"/>
    <property type="match status" value="1"/>
</dbReference>
<dbReference type="Gene3D" id="1.10.238.10">
    <property type="entry name" value="EF-hand"/>
    <property type="match status" value="1"/>
</dbReference>
<dbReference type="InterPro" id="IPR011992">
    <property type="entry name" value="EF-hand-dom_pair"/>
</dbReference>
<dbReference type="InterPro" id="IPR018247">
    <property type="entry name" value="EF_Hand_1_Ca_BS"/>
</dbReference>
<dbReference type="InterPro" id="IPR002048">
    <property type="entry name" value="EF_hand_dom"/>
</dbReference>
<dbReference type="InterPro" id="IPR008080">
    <property type="entry name" value="Parvalbumin"/>
</dbReference>
<dbReference type="PANTHER" id="PTHR11653:SF12">
    <property type="entry name" value="PARVALBUMIN"/>
    <property type="match status" value="1"/>
</dbReference>
<dbReference type="PANTHER" id="PTHR11653">
    <property type="entry name" value="PARVALBUMIN ALPHA"/>
    <property type="match status" value="1"/>
</dbReference>
<dbReference type="Pfam" id="PF13499">
    <property type="entry name" value="EF-hand_7"/>
    <property type="match status" value="1"/>
</dbReference>
<dbReference type="PRINTS" id="PR01697">
    <property type="entry name" value="PARVALBUMIN"/>
</dbReference>
<dbReference type="SMART" id="SM00054">
    <property type="entry name" value="EFh"/>
    <property type="match status" value="2"/>
</dbReference>
<dbReference type="SUPFAM" id="SSF47473">
    <property type="entry name" value="EF-hand"/>
    <property type="match status" value="1"/>
</dbReference>
<dbReference type="PROSITE" id="PS00018">
    <property type="entry name" value="EF_HAND_1"/>
    <property type="match status" value="2"/>
</dbReference>
<dbReference type="PROSITE" id="PS50222">
    <property type="entry name" value="EF_HAND_2"/>
    <property type="match status" value="2"/>
</dbReference>
<reference evidence="8" key="1">
    <citation type="journal article" date="2010" name="J. Proteome Res.">
        <title>Extensive de novo sequencing of new parvalbumin isoforms using a novel combination of bottom-up proteomics, accurate molecular mass measurement by FTICR-MS, and selected MS/MS ion monitoring.</title>
        <authorList>
            <person name="Carrera M."/>
            <person name="Canas B."/>
            <person name="Vazquez J."/>
            <person name="Gallardo J.M."/>
        </authorList>
    </citation>
    <scope>PROTEIN SEQUENCE</scope>
    <scope>MASS SPECTROMETRY</scope>
    <scope>ACETYLATION AT ALA-1</scope>
    <source>
        <tissue evidence="6">Muscle</tissue>
    </source>
</reference>
<proteinExistence type="evidence at protein level"/>
<evidence type="ECO:0000250" key="1">
    <source>
        <dbReference type="UniProtKB" id="P02621"/>
    </source>
</evidence>
<evidence type="ECO:0000250" key="2">
    <source>
        <dbReference type="UniProtKB" id="P02622"/>
    </source>
</evidence>
<evidence type="ECO:0000250" key="3">
    <source>
        <dbReference type="UniProtKB" id="P02624"/>
    </source>
</evidence>
<evidence type="ECO:0000255" key="4"/>
<evidence type="ECO:0000255" key="5">
    <source>
        <dbReference type="PROSITE-ProRule" id="PRU00448"/>
    </source>
</evidence>
<evidence type="ECO:0000269" key="6">
    <source>
    </source>
</evidence>
<evidence type="ECO:0000303" key="7">
    <source>
    </source>
</evidence>
<evidence type="ECO:0000305" key="8"/>